<organism>
    <name type="scientific">Leuconostoc mesenteroides subsp. mesenteroides (strain ATCC 8293 / DSM 20343 / BCRC 11652 / CCM 1803 / JCM 6124 / NCDO 523 / NBRC 100496 / NCIMB 8023 / NCTC 12954 / NRRL B-1118 / 37Y)</name>
    <dbReference type="NCBI Taxonomy" id="203120"/>
    <lineage>
        <taxon>Bacteria</taxon>
        <taxon>Bacillati</taxon>
        <taxon>Bacillota</taxon>
        <taxon>Bacilli</taxon>
        <taxon>Lactobacillales</taxon>
        <taxon>Lactobacillaceae</taxon>
        <taxon>Leuconostoc</taxon>
    </lineage>
</organism>
<accession>Q03ZM0</accession>
<name>RPOA_LEUMM</name>
<dbReference type="EC" id="2.7.7.6" evidence="1"/>
<dbReference type="EMBL" id="CP000414">
    <property type="protein sequence ID" value="ABJ61352.1"/>
    <property type="molecule type" value="Genomic_DNA"/>
</dbReference>
<dbReference type="RefSeq" id="WP_011679138.1">
    <property type="nucleotide sequence ID" value="NC_008531.1"/>
</dbReference>
<dbReference type="SMR" id="Q03ZM0"/>
<dbReference type="EnsemblBacteria" id="ABJ61352">
    <property type="protein sequence ID" value="ABJ61352"/>
    <property type="gene ID" value="LEUM_0221"/>
</dbReference>
<dbReference type="KEGG" id="lme:LEUM_0221"/>
<dbReference type="eggNOG" id="COG0202">
    <property type="taxonomic scope" value="Bacteria"/>
</dbReference>
<dbReference type="HOGENOM" id="CLU_053084_0_1_9"/>
<dbReference type="Proteomes" id="UP000000362">
    <property type="component" value="Chromosome"/>
</dbReference>
<dbReference type="GO" id="GO:0005737">
    <property type="term" value="C:cytoplasm"/>
    <property type="evidence" value="ECO:0007669"/>
    <property type="project" value="UniProtKB-ARBA"/>
</dbReference>
<dbReference type="GO" id="GO:0000428">
    <property type="term" value="C:DNA-directed RNA polymerase complex"/>
    <property type="evidence" value="ECO:0007669"/>
    <property type="project" value="UniProtKB-KW"/>
</dbReference>
<dbReference type="GO" id="GO:0003677">
    <property type="term" value="F:DNA binding"/>
    <property type="evidence" value="ECO:0007669"/>
    <property type="project" value="UniProtKB-UniRule"/>
</dbReference>
<dbReference type="GO" id="GO:0003899">
    <property type="term" value="F:DNA-directed RNA polymerase activity"/>
    <property type="evidence" value="ECO:0007669"/>
    <property type="project" value="UniProtKB-UniRule"/>
</dbReference>
<dbReference type="GO" id="GO:0046983">
    <property type="term" value="F:protein dimerization activity"/>
    <property type="evidence" value="ECO:0007669"/>
    <property type="project" value="InterPro"/>
</dbReference>
<dbReference type="GO" id="GO:0006351">
    <property type="term" value="P:DNA-templated transcription"/>
    <property type="evidence" value="ECO:0007669"/>
    <property type="project" value="UniProtKB-UniRule"/>
</dbReference>
<dbReference type="CDD" id="cd06928">
    <property type="entry name" value="RNAP_alpha_NTD"/>
    <property type="match status" value="1"/>
</dbReference>
<dbReference type="FunFam" id="2.170.120.12:FF:000001">
    <property type="entry name" value="DNA-directed RNA polymerase subunit alpha"/>
    <property type="match status" value="1"/>
</dbReference>
<dbReference type="Gene3D" id="1.10.150.20">
    <property type="entry name" value="5' to 3' exonuclease, C-terminal subdomain"/>
    <property type="match status" value="1"/>
</dbReference>
<dbReference type="Gene3D" id="2.170.120.12">
    <property type="entry name" value="DNA-directed RNA polymerase, insert domain"/>
    <property type="match status" value="1"/>
</dbReference>
<dbReference type="Gene3D" id="3.30.1360.10">
    <property type="entry name" value="RNA polymerase, RBP11-like subunit"/>
    <property type="match status" value="1"/>
</dbReference>
<dbReference type="HAMAP" id="MF_00059">
    <property type="entry name" value="RNApol_bact_RpoA"/>
    <property type="match status" value="1"/>
</dbReference>
<dbReference type="InterPro" id="IPR011262">
    <property type="entry name" value="DNA-dir_RNA_pol_insert"/>
</dbReference>
<dbReference type="InterPro" id="IPR011263">
    <property type="entry name" value="DNA-dir_RNA_pol_RpoA/D/Rpb3"/>
</dbReference>
<dbReference type="InterPro" id="IPR011773">
    <property type="entry name" value="DNA-dir_RpoA"/>
</dbReference>
<dbReference type="InterPro" id="IPR036603">
    <property type="entry name" value="RBP11-like"/>
</dbReference>
<dbReference type="InterPro" id="IPR011260">
    <property type="entry name" value="RNAP_asu_C"/>
</dbReference>
<dbReference type="InterPro" id="IPR036643">
    <property type="entry name" value="RNApol_insert_sf"/>
</dbReference>
<dbReference type="NCBIfam" id="NF003513">
    <property type="entry name" value="PRK05182.1-2"/>
    <property type="match status" value="1"/>
</dbReference>
<dbReference type="NCBIfam" id="NF003515">
    <property type="entry name" value="PRK05182.2-1"/>
    <property type="match status" value="1"/>
</dbReference>
<dbReference type="NCBIfam" id="NF003519">
    <property type="entry name" value="PRK05182.2-5"/>
    <property type="match status" value="1"/>
</dbReference>
<dbReference type="NCBIfam" id="TIGR02027">
    <property type="entry name" value="rpoA"/>
    <property type="match status" value="1"/>
</dbReference>
<dbReference type="Pfam" id="PF01000">
    <property type="entry name" value="RNA_pol_A_bac"/>
    <property type="match status" value="1"/>
</dbReference>
<dbReference type="Pfam" id="PF03118">
    <property type="entry name" value="RNA_pol_A_CTD"/>
    <property type="match status" value="1"/>
</dbReference>
<dbReference type="Pfam" id="PF01193">
    <property type="entry name" value="RNA_pol_L"/>
    <property type="match status" value="1"/>
</dbReference>
<dbReference type="SMART" id="SM00662">
    <property type="entry name" value="RPOLD"/>
    <property type="match status" value="1"/>
</dbReference>
<dbReference type="SUPFAM" id="SSF47789">
    <property type="entry name" value="C-terminal domain of RNA polymerase alpha subunit"/>
    <property type="match status" value="1"/>
</dbReference>
<dbReference type="SUPFAM" id="SSF56553">
    <property type="entry name" value="Insert subdomain of RNA polymerase alpha subunit"/>
    <property type="match status" value="1"/>
</dbReference>
<dbReference type="SUPFAM" id="SSF55257">
    <property type="entry name" value="RBP11-like subunits of RNA polymerase"/>
    <property type="match status" value="1"/>
</dbReference>
<reference key="1">
    <citation type="journal article" date="2006" name="Proc. Natl. Acad. Sci. U.S.A.">
        <title>Comparative genomics of the lactic acid bacteria.</title>
        <authorList>
            <person name="Makarova K.S."/>
            <person name="Slesarev A."/>
            <person name="Wolf Y.I."/>
            <person name="Sorokin A."/>
            <person name="Mirkin B."/>
            <person name="Koonin E.V."/>
            <person name="Pavlov A."/>
            <person name="Pavlova N."/>
            <person name="Karamychev V."/>
            <person name="Polouchine N."/>
            <person name="Shakhova V."/>
            <person name="Grigoriev I."/>
            <person name="Lou Y."/>
            <person name="Rohksar D."/>
            <person name="Lucas S."/>
            <person name="Huang K."/>
            <person name="Goodstein D.M."/>
            <person name="Hawkins T."/>
            <person name="Plengvidhya V."/>
            <person name="Welker D."/>
            <person name="Hughes J."/>
            <person name="Goh Y."/>
            <person name="Benson A."/>
            <person name="Baldwin K."/>
            <person name="Lee J.-H."/>
            <person name="Diaz-Muniz I."/>
            <person name="Dosti B."/>
            <person name="Smeianov V."/>
            <person name="Wechter W."/>
            <person name="Barabote R."/>
            <person name="Lorca G."/>
            <person name="Altermann E."/>
            <person name="Barrangou R."/>
            <person name="Ganesan B."/>
            <person name="Xie Y."/>
            <person name="Rawsthorne H."/>
            <person name="Tamir D."/>
            <person name="Parker C."/>
            <person name="Breidt F."/>
            <person name="Broadbent J.R."/>
            <person name="Hutkins R."/>
            <person name="O'Sullivan D."/>
            <person name="Steele J."/>
            <person name="Unlu G."/>
            <person name="Saier M.H. Jr."/>
            <person name="Klaenhammer T."/>
            <person name="Richardson P."/>
            <person name="Kozyavkin S."/>
            <person name="Weimer B.C."/>
            <person name="Mills D.A."/>
        </authorList>
    </citation>
    <scope>NUCLEOTIDE SEQUENCE [LARGE SCALE GENOMIC DNA]</scope>
    <source>
        <strain>ATCC 8293 / DSM 20343 / BCRC 11652 / CCM 1803 / JCM 6124 / NCDO 523 / NBRC 100496 / NCIMB 8023 / NCTC 12954 / NRRL B-1118 / 37Y</strain>
    </source>
</reference>
<keyword id="KW-0240">DNA-directed RNA polymerase</keyword>
<keyword id="KW-0548">Nucleotidyltransferase</keyword>
<keyword id="KW-1185">Reference proteome</keyword>
<keyword id="KW-0804">Transcription</keyword>
<keyword id="KW-0808">Transferase</keyword>
<gene>
    <name evidence="1" type="primary">rpoA</name>
    <name type="ordered locus">LEUM_0221</name>
</gene>
<feature type="chain" id="PRO_0000296828" description="DNA-directed RNA polymerase subunit alpha">
    <location>
        <begin position="1"/>
        <end position="314"/>
    </location>
</feature>
<feature type="region of interest" description="Alpha N-terminal domain (alpha-NTD)" evidence="1">
    <location>
        <begin position="1"/>
        <end position="228"/>
    </location>
</feature>
<feature type="region of interest" description="Alpha C-terminal domain (alpha-CTD)" evidence="1">
    <location>
        <begin position="242"/>
        <end position="314"/>
    </location>
</feature>
<comment type="function">
    <text evidence="1">DNA-dependent RNA polymerase catalyzes the transcription of DNA into RNA using the four ribonucleoside triphosphates as substrates.</text>
</comment>
<comment type="catalytic activity">
    <reaction evidence="1">
        <text>RNA(n) + a ribonucleoside 5'-triphosphate = RNA(n+1) + diphosphate</text>
        <dbReference type="Rhea" id="RHEA:21248"/>
        <dbReference type="Rhea" id="RHEA-COMP:14527"/>
        <dbReference type="Rhea" id="RHEA-COMP:17342"/>
        <dbReference type="ChEBI" id="CHEBI:33019"/>
        <dbReference type="ChEBI" id="CHEBI:61557"/>
        <dbReference type="ChEBI" id="CHEBI:140395"/>
        <dbReference type="EC" id="2.7.7.6"/>
    </reaction>
</comment>
<comment type="subunit">
    <text evidence="1">Homodimer. The RNAP catalytic core consists of 2 alpha, 1 beta, 1 beta' and 1 omega subunit. When a sigma factor is associated with the core the holoenzyme is formed, which can initiate transcription.</text>
</comment>
<comment type="domain">
    <text evidence="1">The N-terminal domain is essential for RNAP assembly and basal transcription, whereas the C-terminal domain is involved in interaction with transcriptional regulators and with upstream promoter elements.</text>
</comment>
<comment type="similarity">
    <text evidence="1">Belongs to the RNA polymerase alpha chain family.</text>
</comment>
<evidence type="ECO:0000255" key="1">
    <source>
        <dbReference type="HAMAP-Rule" id="MF_00059"/>
    </source>
</evidence>
<proteinExistence type="inferred from homology"/>
<protein>
    <recommendedName>
        <fullName evidence="1">DNA-directed RNA polymerase subunit alpha</fullName>
        <shortName evidence="1">RNAP subunit alpha</shortName>
        <ecNumber evidence="1">2.7.7.6</ecNumber>
    </recommendedName>
    <alternativeName>
        <fullName evidence="1">RNA polymerase subunit alpha</fullName>
    </alternativeName>
    <alternativeName>
        <fullName evidence="1">Transcriptase subunit alpha</fullName>
    </alternativeName>
</protein>
<sequence length="314" mass="34240">MIEFEKPNIHNIEEDARYGKFVVEPLERGYGTTLGNSLRRILLSSLPGAAVNTVQIDGVVHEFSTVDGVVEDVTQIILNLKKVVLAIDSDDERSLEIDIQGPADVTAADLQGGADVEVLNPDLHIATVAAGKSLHMTVTAVKGRGYTSADENKKLRDEMPIGVLAVDSIYTPIERVNYQVENTRIGARDDYDKLTFDIWTNGSIKPSDALSLGAKILAEHLGLFMDISPVAAEASVMVEAEPVAASASDSAPIEDLDLSVRSYNCLKRAGINTIVELTDRTEADMMKVRNLGRKSLDEIQEKLTDMNLGFRKED</sequence>